<name>DCTP_VIBCH</name>
<reference key="1">
    <citation type="journal article" date="2000" name="Nature">
        <title>DNA sequence of both chromosomes of the cholera pathogen Vibrio cholerae.</title>
        <authorList>
            <person name="Heidelberg J.F."/>
            <person name="Eisen J.A."/>
            <person name="Nelson W.C."/>
            <person name="Clayton R.A."/>
            <person name="Gwinn M.L."/>
            <person name="Dodson R.J."/>
            <person name="Haft D.H."/>
            <person name="Hickey E.K."/>
            <person name="Peterson J.D."/>
            <person name="Umayam L.A."/>
            <person name="Gill S.R."/>
            <person name="Nelson K.E."/>
            <person name="Read T.D."/>
            <person name="Tettelin H."/>
            <person name="Richardson D.L."/>
            <person name="Ermolaeva M.D."/>
            <person name="Vamathevan J.J."/>
            <person name="Bass S."/>
            <person name="Qin H."/>
            <person name="Dragoi I."/>
            <person name="Sellers P."/>
            <person name="McDonald L.A."/>
            <person name="Utterback T.R."/>
            <person name="Fleischmann R.D."/>
            <person name="Nierman W.C."/>
            <person name="White O."/>
            <person name="Salzberg S.L."/>
            <person name="Smith H.O."/>
            <person name="Colwell R.R."/>
            <person name="Mekalanos J.J."/>
            <person name="Venter J.C."/>
            <person name="Fraser C.M."/>
        </authorList>
    </citation>
    <scope>NUCLEOTIDE SEQUENCE [LARGE SCALE GENOMIC DNA]</scope>
    <source>
        <strain>ATCC 39315 / El Tor Inaba N16961</strain>
    </source>
</reference>
<reference key="2">
    <citation type="journal article" date="2011" name="Microbiology">
        <title>Functional characterization of VC1929 of Vibrio cholerae El Tor: role in mannose-sensitive haemagglutination, virulence and utilization of sialic acid.</title>
        <authorList>
            <person name="Sharma S.K."/>
            <person name="Moe T.S."/>
            <person name="Srivastava R."/>
            <person name="Chandra D."/>
            <person name="Srivastava B.S."/>
        </authorList>
    </citation>
    <scope>PRELIMINARY FUNCTION</scope>
</reference>
<reference key="3">
    <citation type="journal article" date="2011" name="Microbiology">
        <title>On sialic acid transport and utilization by Vibrio cholerae.</title>
        <authorList>
            <person name="Thomas G.H."/>
            <person name="Boyd E.F."/>
        </authorList>
    </citation>
    <scope>DISCUSSION OF FUNCTION</scope>
</reference>
<reference key="4">
    <citation type="journal article" date="2012" name="Microbiology">
        <title>The VC1777-VC1779 proteins are members of a sialic acid-specific subfamily of TRAP transporters (SiaPQM) and constitute the sole route of sialic acid uptake in the human pathogen Vibrio cholerae.</title>
        <authorList>
            <person name="Chowdhury N."/>
            <person name="Norris J."/>
            <person name="McAlister E."/>
            <person name="Lau S.Y."/>
            <person name="Thomas G.H."/>
            <person name="Boyd E.F."/>
        </authorList>
    </citation>
    <scope>PROBABLE FUNCTION</scope>
    <scope>DISRUPTION PHENOTYPE</scope>
</reference>
<keyword id="KW-0574">Periplasm</keyword>
<keyword id="KW-1185">Reference proteome</keyword>
<keyword id="KW-0732">Signal</keyword>
<keyword id="KW-0813">Transport</keyword>
<protein>
    <recommendedName>
        <fullName evidence="5">C4-dicarboxylate-binding periplasmic protein DctP</fullName>
    </recommendedName>
</protein>
<feature type="signal peptide" evidence="2">
    <location>
        <begin position="1"/>
        <end position="22"/>
    </location>
</feature>
<feature type="chain" id="PRO_5004328486" description="C4-dicarboxylate-binding periplasmic protein DctP">
    <location>
        <begin position="23"/>
        <end position="332"/>
    </location>
</feature>
<gene>
    <name evidence="4" type="primary">dctP</name>
    <name evidence="9" type="ordered locus">VC_1929</name>
</gene>
<proteinExistence type="inferred from homology"/>
<accession>Q9KQR9</accession>
<organism>
    <name type="scientific">Vibrio cholerae serotype O1 (strain ATCC 39315 / El Tor Inaba N16961)</name>
    <dbReference type="NCBI Taxonomy" id="243277"/>
    <lineage>
        <taxon>Bacteria</taxon>
        <taxon>Pseudomonadati</taxon>
        <taxon>Pseudomonadota</taxon>
        <taxon>Gammaproteobacteria</taxon>
        <taxon>Vibrionales</taxon>
        <taxon>Vibrionaceae</taxon>
        <taxon>Vibrio</taxon>
    </lineage>
</organism>
<comment type="function">
    <text evidence="8">Part of the tripartite ATP-independent periplasmic (TRAP) transport system DctPQM involved in C4-dicarboxylates uptake.</text>
</comment>
<comment type="subunit">
    <text evidence="1">The complex comprises the extracytoplasmic solute receptor protein DctP, and the two transmembrane proteins DctQ and DctM.</text>
</comment>
<comment type="subcellular location">
    <subcellularLocation>
        <location evidence="1">Periplasm</location>
    </subcellularLocation>
</comment>
<comment type="disruption phenotype">
    <text evidence="3">Disruption decreases growth on C4-dicarboxylates succinate, fumarate and L-malate as sole carbon sources, but does not affect growth on sialic acid.</text>
</comment>
<comment type="similarity">
    <text evidence="5">Belongs to the bacterial solute-binding protein 7 family.</text>
</comment>
<comment type="caution">
    <text evidence="6 7 8">Was proposed to function as a mannose-sensitive hemagglutinin and a virulence factor, and to be involved in the utilization of sialic acid (PubMed:21873407). However, it was later shown to be probably part of a C4-dicarboxylate TRAP transporter (PubMed:21980116, PubMed:22556361).</text>
</comment>
<dbReference type="EMBL" id="AE003852">
    <property type="protein sequence ID" value="AAF95077.1"/>
    <property type="molecule type" value="Genomic_DNA"/>
</dbReference>
<dbReference type="PIR" id="F82140">
    <property type="entry name" value="F82140"/>
</dbReference>
<dbReference type="RefSeq" id="NP_231563.1">
    <property type="nucleotide sequence ID" value="NC_002505.1"/>
</dbReference>
<dbReference type="RefSeq" id="WP_000476112.1">
    <property type="nucleotide sequence ID" value="NZ_LT906614.1"/>
</dbReference>
<dbReference type="SMR" id="Q9KQR9"/>
<dbReference type="STRING" id="243277.VC_1929"/>
<dbReference type="DNASU" id="2613558"/>
<dbReference type="EnsemblBacteria" id="AAF95077">
    <property type="protein sequence ID" value="AAF95077"/>
    <property type="gene ID" value="VC_1929"/>
</dbReference>
<dbReference type="GeneID" id="89514772"/>
<dbReference type="KEGG" id="vch:VC_1929"/>
<dbReference type="PATRIC" id="fig|243277.26.peg.1846"/>
<dbReference type="eggNOG" id="COG1638">
    <property type="taxonomic scope" value="Bacteria"/>
</dbReference>
<dbReference type="HOGENOM" id="CLU_036176_1_3_6"/>
<dbReference type="Proteomes" id="UP000000584">
    <property type="component" value="Chromosome 1"/>
</dbReference>
<dbReference type="GO" id="GO:0030288">
    <property type="term" value="C:outer membrane-bounded periplasmic space"/>
    <property type="evidence" value="ECO:0007669"/>
    <property type="project" value="InterPro"/>
</dbReference>
<dbReference type="GO" id="GO:0015740">
    <property type="term" value="P:C4-dicarboxylate transport"/>
    <property type="evidence" value="ECO:0000318"/>
    <property type="project" value="GO_Central"/>
</dbReference>
<dbReference type="GO" id="GO:0055085">
    <property type="term" value="P:transmembrane transport"/>
    <property type="evidence" value="ECO:0007669"/>
    <property type="project" value="InterPro"/>
</dbReference>
<dbReference type="FunFam" id="3.40.190.170:FF:000001">
    <property type="entry name" value="TRAP dicarboxylate transporter, DctP subunit"/>
    <property type="match status" value="1"/>
</dbReference>
<dbReference type="Gene3D" id="3.40.190.170">
    <property type="entry name" value="Bacterial extracellular solute-binding protein, family 7"/>
    <property type="match status" value="1"/>
</dbReference>
<dbReference type="InterPro" id="IPR018389">
    <property type="entry name" value="DctP_fam"/>
</dbReference>
<dbReference type="InterPro" id="IPR004682">
    <property type="entry name" value="TRAP_DctP"/>
</dbReference>
<dbReference type="InterPro" id="IPR038404">
    <property type="entry name" value="TRAP_DctP_sf"/>
</dbReference>
<dbReference type="NCBIfam" id="TIGR00787">
    <property type="entry name" value="dctP"/>
    <property type="match status" value="1"/>
</dbReference>
<dbReference type="NCBIfam" id="NF037995">
    <property type="entry name" value="TRAP_S1"/>
    <property type="match status" value="1"/>
</dbReference>
<dbReference type="PANTHER" id="PTHR33376">
    <property type="match status" value="1"/>
</dbReference>
<dbReference type="PANTHER" id="PTHR33376:SF7">
    <property type="entry name" value="C4-DICARBOXYLATE-BINDING PROTEIN DCTB"/>
    <property type="match status" value="1"/>
</dbReference>
<dbReference type="Pfam" id="PF03480">
    <property type="entry name" value="DctP"/>
    <property type="match status" value="1"/>
</dbReference>
<dbReference type="PIRSF" id="PIRSF006470">
    <property type="entry name" value="DctB"/>
    <property type="match status" value="1"/>
</dbReference>
<sequence length="332" mass="37095">MFKPLTLIAASILAVTSFNAAANCDPGEIVIKFSHVTNTDKHPKGIAASLLEKRVNEEMNGKACMQVFPNSTLYDDDKVLEALLNGDVQLAAPSLSKFEKFTKKYRIFDLPFLFEDVDAVDRFQSSAKGEELKNAMTRRGVKGLEFWHNGMKQISANKPILVPADAKGLKFRVQASDVLVAQFEQIGANPQKMSFAETYGGLQTKVIDGQENTWSNIYGQKYFEVQDGTTETNHGILDYLVVTSSKWWDGLPADVRDQFAKILNEVTIERNAESNKVEELNKQYIIEAGGVVRTLTPEQRQQWVDALKPVWQKFEKDIGADLIEAALAANQK</sequence>
<evidence type="ECO:0000250" key="1">
    <source>
        <dbReference type="UniProtKB" id="P37735"/>
    </source>
</evidence>
<evidence type="ECO:0000255" key="2"/>
<evidence type="ECO:0000269" key="3">
    <source>
    </source>
</evidence>
<evidence type="ECO:0000303" key="4">
    <source>
    </source>
</evidence>
<evidence type="ECO:0000305" key="5"/>
<evidence type="ECO:0000305" key="6">
    <source>
    </source>
</evidence>
<evidence type="ECO:0000305" key="7">
    <source>
    </source>
</evidence>
<evidence type="ECO:0000305" key="8">
    <source>
    </source>
</evidence>
<evidence type="ECO:0000312" key="9">
    <source>
        <dbReference type="EMBL" id="AAF95077.1"/>
    </source>
</evidence>